<reference key="1">
    <citation type="journal article" date="2009" name="PLoS Genet.">
        <title>Organised genome dynamics in the Escherichia coli species results in highly diverse adaptive paths.</title>
        <authorList>
            <person name="Touchon M."/>
            <person name="Hoede C."/>
            <person name="Tenaillon O."/>
            <person name="Barbe V."/>
            <person name="Baeriswyl S."/>
            <person name="Bidet P."/>
            <person name="Bingen E."/>
            <person name="Bonacorsi S."/>
            <person name="Bouchier C."/>
            <person name="Bouvet O."/>
            <person name="Calteau A."/>
            <person name="Chiapello H."/>
            <person name="Clermont O."/>
            <person name="Cruveiller S."/>
            <person name="Danchin A."/>
            <person name="Diard M."/>
            <person name="Dossat C."/>
            <person name="Karoui M.E."/>
            <person name="Frapy E."/>
            <person name="Garry L."/>
            <person name="Ghigo J.M."/>
            <person name="Gilles A.M."/>
            <person name="Johnson J."/>
            <person name="Le Bouguenec C."/>
            <person name="Lescat M."/>
            <person name="Mangenot S."/>
            <person name="Martinez-Jehanne V."/>
            <person name="Matic I."/>
            <person name="Nassif X."/>
            <person name="Oztas S."/>
            <person name="Petit M.A."/>
            <person name="Pichon C."/>
            <person name="Rouy Z."/>
            <person name="Ruf C.S."/>
            <person name="Schneider D."/>
            <person name="Tourret J."/>
            <person name="Vacherie B."/>
            <person name="Vallenet D."/>
            <person name="Medigue C."/>
            <person name="Rocha E.P.C."/>
            <person name="Denamur E."/>
        </authorList>
    </citation>
    <scope>NUCLEOTIDE SEQUENCE [LARGE SCALE GENOMIC DNA]</scope>
    <source>
        <strain>ED1a</strain>
    </source>
</reference>
<accession>B7MYZ0</accession>
<keyword id="KW-0071">Autoinducer synthesis</keyword>
<keyword id="KW-0408">Iron</keyword>
<keyword id="KW-0456">Lyase</keyword>
<keyword id="KW-0479">Metal-binding</keyword>
<keyword id="KW-0673">Quorum sensing</keyword>
<feature type="chain" id="PRO_1000118538" description="S-ribosylhomocysteine lyase">
    <location>
        <begin position="1"/>
        <end position="171"/>
    </location>
</feature>
<feature type="binding site" evidence="1">
    <location>
        <position position="54"/>
    </location>
    <ligand>
        <name>Fe cation</name>
        <dbReference type="ChEBI" id="CHEBI:24875"/>
    </ligand>
</feature>
<feature type="binding site" evidence="1">
    <location>
        <position position="58"/>
    </location>
    <ligand>
        <name>Fe cation</name>
        <dbReference type="ChEBI" id="CHEBI:24875"/>
    </ligand>
</feature>
<feature type="binding site" evidence="1">
    <location>
        <position position="128"/>
    </location>
    <ligand>
        <name>Fe cation</name>
        <dbReference type="ChEBI" id="CHEBI:24875"/>
    </ligand>
</feature>
<gene>
    <name evidence="1" type="primary">luxS</name>
    <name type="ordered locus">ECED1_3141</name>
</gene>
<organism>
    <name type="scientific">Escherichia coli O81 (strain ED1a)</name>
    <dbReference type="NCBI Taxonomy" id="585397"/>
    <lineage>
        <taxon>Bacteria</taxon>
        <taxon>Pseudomonadati</taxon>
        <taxon>Pseudomonadota</taxon>
        <taxon>Gammaproteobacteria</taxon>
        <taxon>Enterobacterales</taxon>
        <taxon>Enterobacteriaceae</taxon>
        <taxon>Escherichia</taxon>
    </lineage>
</organism>
<sequence>MPLLDSFTVDHTRMEAPAVRVAKTMNTPHGDAITVFDLRFCVPNKEVMPERGIHTLEHLFAGFMRNHLNGNGVEIIDISPMGCRTGFYMSLIGTPDEQRVADAWKAAMEDVLKVQDQNQIPELNVYQCGTYQMHSLQEAQDIARNILERDVRINSNEELALPKEKLQELHI</sequence>
<comment type="function">
    <text evidence="1">Involved in the synthesis of autoinducer 2 (AI-2) which is secreted by bacteria and is used to communicate both the cell density and the metabolic potential of the environment. The regulation of gene expression in response to changes in cell density is called quorum sensing. Catalyzes the transformation of S-ribosylhomocysteine (RHC) to homocysteine (HC) and 4,5-dihydroxy-2,3-pentadione (DPD).</text>
</comment>
<comment type="catalytic activity">
    <reaction evidence="1">
        <text>S-(5-deoxy-D-ribos-5-yl)-L-homocysteine = (S)-4,5-dihydroxypentane-2,3-dione + L-homocysteine</text>
        <dbReference type="Rhea" id="RHEA:17753"/>
        <dbReference type="ChEBI" id="CHEBI:29484"/>
        <dbReference type="ChEBI" id="CHEBI:58195"/>
        <dbReference type="ChEBI" id="CHEBI:58199"/>
        <dbReference type="EC" id="4.4.1.21"/>
    </reaction>
</comment>
<comment type="cofactor">
    <cofactor evidence="1">
        <name>Fe cation</name>
        <dbReference type="ChEBI" id="CHEBI:24875"/>
    </cofactor>
    <text evidence="1">Binds 1 Fe cation per subunit.</text>
</comment>
<comment type="subunit">
    <text evidence="1">Homodimer.</text>
</comment>
<comment type="similarity">
    <text evidence="1">Belongs to the LuxS family.</text>
</comment>
<name>LUXS_ECO81</name>
<protein>
    <recommendedName>
        <fullName evidence="1">S-ribosylhomocysteine lyase</fullName>
        <ecNumber evidence="1">4.4.1.21</ecNumber>
    </recommendedName>
    <alternativeName>
        <fullName evidence="1">AI-2 synthesis protein</fullName>
    </alternativeName>
    <alternativeName>
        <fullName evidence="1">Autoinducer-2 production protein LuxS</fullName>
    </alternativeName>
</protein>
<dbReference type="EC" id="4.4.1.21" evidence="1"/>
<dbReference type="EMBL" id="CU928162">
    <property type="protein sequence ID" value="CAR09307.2"/>
    <property type="molecule type" value="Genomic_DNA"/>
</dbReference>
<dbReference type="RefSeq" id="WP_001130208.1">
    <property type="nucleotide sequence ID" value="NC_011745.1"/>
</dbReference>
<dbReference type="SMR" id="B7MYZ0"/>
<dbReference type="KEGG" id="ecq:ECED1_3141"/>
<dbReference type="HOGENOM" id="CLU_107531_2_0_6"/>
<dbReference type="Proteomes" id="UP000000748">
    <property type="component" value="Chromosome"/>
</dbReference>
<dbReference type="GO" id="GO:0005506">
    <property type="term" value="F:iron ion binding"/>
    <property type="evidence" value="ECO:0007669"/>
    <property type="project" value="InterPro"/>
</dbReference>
<dbReference type="GO" id="GO:0043768">
    <property type="term" value="F:S-ribosylhomocysteine lyase activity"/>
    <property type="evidence" value="ECO:0007669"/>
    <property type="project" value="UniProtKB-UniRule"/>
</dbReference>
<dbReference type="GO" id="GO:0009372">
    <property type="term" value="P:quorum sensing"/>
    <property type="evidence" value="ECO:0007669"/>
    <property type="project" value="UniProtKB-UniRule"/>
</dbReference>
<dbReference type="FunFam" id="3.30.1360.80:FF:000001">
    <property type="entry name" value="S-ribosylhomocysteine lyase"/>
    <property type="match status" value="1"/>
</dbReference>
<dbReference type="Gene3D" id="3.30.1360.80">
    <property type="entry name" value="S-ribosylhomocysteinase (LuxS)"/>
    <property type="match status" value="1"/>
</dbReference>
<dbReference type="HAMAP" id="MF_00091">
    <property type="entry name" value="LuxS"/>
    <property type="match status" value="1"/>
</dbReference>
<dbReference type="InterPro" id="IPR037005">
    <property type="entry name" value="LuxS_sf"/>
</dbReference>
<dbReference type="InterPro" id="IPR011249">
    <property type="entry name" value="Metalloenz_LuxS/M16"/>
</dbReference>
<dbReference type="InterPro" id="IPR003815">
    <property type="entry name" value="S-ribosylhomocysteinase"/>
</dbReference>
<dbReference type="NCBIfam" id="NF002602">
    <property type="entry name" value="PRK02260.1-2"/>
    <property type="match status" value="1"/>
</dbReference>
<dbReference type="PANTHER" id="PTHR35799">
    <property type="entry name" value="S-RIBOSYLHOMOCYSTEINE LYASE"/>
    <property type="match status" value="1"/>
</dbReference>
<dbReference type="PANTHER" id="PTHR35799:SF1">
    <property type="entry name" value="S-RIBOSYLHOMOCYSTEINE LYASE"/>
    <property type="match status" value="1"/>
</dbReference>
<dbReference type="Pfam" id="PF02664">
    <property type="entry name" value="LuxS"/>
    <property type="match status" value="1"/>
</dbReference>
<dbReference type="PIRSF" id="PIRSF006160">
    <property type="entry name" value="AI2"/>
    <property type="match status" value="1"/>
</dbReference>
<dbReference type="PRINTS" id="PR01487">
    <property type="entry name" value="LUXSPROTEIN"/>
</dbReference>
<dbReference type="SUPFAM" id="SSF63411">
    <property type="entry name" value="LuxS/MPP-like metallohydrolase"/>
    <property type="match status" value="1"/>
</dbReference>
<proteinExistence type="inferred from homology"/>
<evidence type="ECO:0000255" key="1">
    <source>
        <dbReference type="HAMAP-Rule" id="MF_00091"/>
    </source>
</evidence>